<dbReference type="EMBL" id="AF488562">
    <property type="protein sequence ID" value="AAM10934.1"/>
    <property type="molecule type" value="mRNA"/>
</dbReference>
<dbReference type="EMBL" id="AC005617">
    <property type="protein sequence ID" value="AAC63586.1"/>
    <property type="status" value="ALT_SEQ"/>
    <property type="molecule type" value="Genomic_DNA"/>
</dbReference>
<dbReference type="EMBL" id="AC006340">
    <property type="protein sequence ID" value="AAM15234.1"/>
    <property type="status" value="ALT_SEQ"/>
    <property type="molecule type" value="Genomic_DNA"/>
</dbReference>
<dbReference type="EMBL" id="CP002685">
    <property type="protein sequence ID" value="AEC07349.1"/>
    <property type="molecule type" value="Genomic_DNA"/>
</dbReference>
<dbReference type="EMBL" id="CP002685">
    <property type="protein sequence ID" value="AEC07350.1"/>
    <property type="molecule type" value="Genomic_DNA"/>
</dbReference>
<dbReference type="EMBL" id="DQ446549">
    <property type="protein sequence ID" value="ABE65848.1"/>
    <property type="molecule type" value="mRNA"/>
</dbReference>
<dbReference type="EMBL" id="DQ653015">
    <property type="protein sequence ID" value="ABK28507.1"/>
    <property type="status" value="ALT_SEQ"/>
    <property type="molecule type" value="mRNA"/>
</dbReference>
<dbReference type="PIR" id="D84616">
    <property type="entry name" value="D84616"/>
</dbReference>
<dbReference type="RefSeq" id="NP_001077944.1">
    <molecule id="Q1PF17-1"/>
    <property type="nucleotide sequence ID" value="NM_001084475.2"/>
</dbReference>
<dbReference type="RefSeq" id="NP_179860.2">
    <molecule id="Q1PF17-2"/>
    <property type="nucleotide sequence ID" value="NM_127840.3"/>
</dbReference>
<dbReference type="SMR" id="Q1PF17"/>
<dbReference type="BioGRID" id="2158">
    <property type="interactions" value="6"/>
</dbReference>
<dbReference type="FunCoup" id="Q1PF17">
    <property type="interactions" value="115"/>
</dbReference>
<dbReference type="IntAct" id="Q1PF17">
    <property type="interactions" value="5"/>
</dbReference>
<dbReference type="STRING" id="3702.Q1PF17"/>
<dbReference type="PaxDb" id="3702-AT2G22750.2"/>
<dbReference type="EnsemblPlants" id="AT2G22750.1">
    <molecule id="Q1PF17-2"/>
    <property type="protein sequence ID" value="AT2G22750.1"/>
    <property type="gene ID" value="AT2G22750"/>
</dbReference>
<dbReference type="EnsemblPlants" id="AT2G22750.2">
    <molecule id="Q1PF17-1"/>
    <property type="protein sequence ID" value="AT2G22750.2"/>
    <property type="gene ID" value="AT2G22750"/>
</dbReference>
<dbReference type="GeneID" id="816805"/>
<dbReference type="Gramene" id="AT2G22750.1">
    <molecule id="Q1PF17-2"/>
    <property type="protein sequence ID" value="AT2G22750.1"/>
    <property type="gene ID" value="AT2G22750"/>
</dbReference>
<dbReference type="Gramene" id="AT2G22750.2">
    <molecule id="Q1PF17-1"/>
    <property type="protein sequence ID" value="AT2G22750.2"/>
    <property type="gene ID" value="AT2G22750"/>
</dbReference>
<dbReference type="KEGG" id="ath:AT2G22750"/>
<dbReference type="Araport" id="AT2G22750"/>
<dbReference type="TAIR" id="AT2G22750"/>
<dbReference type="eggNOG" id="ENOG502QWBY">
    <property type="taxonomic scope" value="Eukaryota"/>
</dbReference>
<dbReference type="InParanoid" id="Q1PF17"/>
<dbReference type="PhylomeDB" id="Q1PF17"/>
<dbReference type="PRO" id="PR:Q1PF17"/>
<dbReference type="Proteomes" id="UP000006548">
    <property type="component" value="Chromosome 2"/>
</dbReference>
<dbReference type="ExpressionAtlas" id="Q1PF17">
    <property type="expression patterns" value="baseline and differential"/>
</dbReference>
<dbReference type="GO" id="GO:0005634">
    <property type="term" value="C:nucleus"/>
    <property type="evidence" value="ECO:0007669"/>
    <property type="project" value="UniProtKB-SubCell"/>
</dbReference>
<dbReference type="GO" id="GO:0003677">
    <property type="term" value="F:DNA binding"/>
    <property type="evidence" value="ECO:0007669"/>
    <property type="project" value="UniProtKB-KW"/>
</dbReference>
<dbReference type="GO" id="GO:0003700">
    <property type="term" value="F:DNA-binding transcription factor activity"/>
    <property type="evidence" value="ECO:0000250"/>
    <property type="project" value="TAIR"/>
</dbReference>
<dbReference type="GO" id="GO:0046983">
    <property type="term" value="F:protein dimerization activity"/>
    <property type="evidence" value="ECO:0007669"/>
    <property type="project" value="InterPro"/>
</dbReference>
<dbReference type="GO" id="GO:0006355">
    <property type="term" value="P:regulation of DNA-templated transcription"/>
    <property type="evidence" value="ECO:0000304"/>
    <property type="project" value="TAIR"/>
</dbReference>
<dbReference type="FunFam" id="4.10.280.10:FF:000095">
    <property type="entry name" value="Basic helix-loop-helix family protein"/>
    <property type="match status" value="1"/>
</dbReference>
<dbReference type="Gene3D" id="4.10.280.10">
    <property type="entry name" value="Helix-loop-helix DNA-binding domain"/>
    <property type="match status" value="1"/>
</dbReference>
<dbReference type="InterPro" id="IPR054502">
    <property type="entry name" value="bHLH-TF_ACT-like_plant"/>
</dbReference>
<dbReference type="InterPro" id="IPR011598">
    <property type="entry name" value="bHLH_dom"/>
</dbReference>
<dbReference type="InterPro" id="IPR052610">
    <property type="entry name" value="bHLH_transcription_regulator"/>
</dbReference>
<dbReference type="InterPro" id="IPR036638">
    <property type="entry name" value="HLH_DNA-bd_sf"/>
</dbReference>
<dbReference type="PANTHER" id="PTHR45959">
    <property type="entry name" value="BHLH TRANSCRIPTION FACTOR"/>
    <property type="match status" value="1"/>
</dbReference>
<dbReference type="PANTHER" id="PTHR45959:SF18">
    <property type="entry name" value="TRANSCRIPTION FACTOR BHLH18"/>
    <property type="match status" value="1"/>
</dbReference>
<dbReference type="Pfam" id="PF22754">
    <property type="entry name" value="bHLH-TF_ACT-like_plant"/>
    <property type="match status" value="1"/>
</dbReference>
<dbReference type="Pfam" id="PF00010">
    <property type="entry name" value="HLH"/>
    <property type="match status" value="1"/>
</dbReference>
<dbReference type="SMART" id="SM00353">
    <property type="entry name" value="HLH"/>
    <property type="match status" value="1"/>
</dbReference>
<dbReference type="SUPFAM" id="SSF47459">
    <property type="entry name" value="HLH, helix-loop-helix DNA-binding domain"/>
    <property type="match status" value="1"/>
</dbReference>
<dbReference type="PROSITE" id="PS50888">
    <property type="entry name" value="BHLH"/>
    <property type="match status" value="1"/>
</dbReference>
<name>BH018_ARATH</name>
<gene>
    <name type="primary">BHLH18</name>
    <name type="synonym">EN28</name>
    <name type="ordered locus">At2g22750</name>
    <name type="ORF">T30L20.1</name>
</gene>
<reference key="1">
    <citation type="journal article" date="2003" name="Mol. Biol. Evol.">
        <title>The basic helix-loop-helix transcription factor family in plants: a genome-wide study of protein structure and functional diversity.</title>
        <authorList>
            <person name="Heim M.A."/>
            <person name="Jakoby M."/>
            <person name="Werber M."/>
            <person name="Martin C."/>
            <person name="Weisshaar B."/>
            <person name="Bailey P.C."/>
        </authorList>
    </citation>
    <scope>NUCLEOTIDE SEQUENCE [MRNA] (ISOFORM 2)</scope>
    <scope>TISSUE SPECIFICITY</scope>
    <scope>INDUCTION BY COLD</scope>
    <scope>GENE FAMILY</scope>
    <scope>NOMENCLATURE</scope>
    <source>
        <strain>cv. Columbia</strain>
    </source>
</reference>
<reference key="2">
    <citation type="journal article" date="1999" name="Nature">
        <title>Sequence and analysis of chromosome 2 of the plant Arabidopsis thaliana.</title>
        <authorList>
            <person name="Lin X."/>
            <person name="Kaul S."/>
            <person name="Rounsley S.D."/>
            <person name="Shea T.P."/>
            <person name="Benito M.-I."/>
            <person name="Town C.D."/>
            <person name="Fujii C.Y."/>
            <person name="Mason T.M."/>
            <person name="Bowman C.L."/>
            <person name="Barnstead M.E."/>
            <person name="Feldblyum T.V."/>
            <person name="Buell C.R."/>
            <person name="Ketchum K.A."/>
            <person name="Lee J.J."/>
            <person name="Ronning C.M."/>
            <person name="Koo H.L."/>
            <person name="Moffat K.S."/>
            <person name="Cronin L.A."/>
            <person name="Shen M."/>
            <person name="Pai G."/>
            <person name="Van Aken S."/>
            <person name="Umayam L."/>
            <person name="Tallon L.J."/>
            <person name="Gill J.E."/>
            <person name="Adams M.D."/>
            <person name="Carrera A.J."/>
            <person name="Creasy T.H."/>
            <person name="Goodman H.M."/>
            <person name="Somerville C.R."/>
            <person name="Copenhaver G.P."/>
            <person name="Preuss D."/>
            <person name="Nierman W.C."/>
            <person name="White O."/>
            <person name="Eisen J.A."/>
            <person name="Salzberg S.L."/>
            <person name="Fraser C.M."/>
            <person name="Venter J.C."/>
        </authorList>
    </citation>
    <scope>NUCLEOTIDE SEQUENCE [LARGE SCALE GENOMIC DNA]</scope>
    <source>
        <strain>cv. Columbia</strain>
    </source>
</reference>
<reference key="3">
    <citation type="journal article" date="2017" name="Plant J.">
        <title>Araport11: a complete reannotation of the Arabidopsis thaliana reference genome.</title>
        <authorList>
            <person name="Cheng C.Y."/>
            <person name="Krishnakumar V."/>
            <person name="Chan A.P."/>
            <person name="Thibaud-Nissen F."/>
            <person name="Schobel S."/>
            <person name="Town C.D."/>
        </authorList>
    </citation>
    <scope>GENOME REANNOTATION</scope>
    <source>
        <strain>cv. Columbia</strain>
    </source>
</reference>
<reference key="4">
    <citation type="journal article" date="2006" name="Plant Biotechnol. J.">
        <title>Simultaneous high-throughput recombinational cloning of open reading frames in closed and open configurations.</title>
        <authorList>
            <person name="Underwood B.A."/>
            <person name="Vanderhaeghen R."/>
            <person name="Whitford R."/>
            <person name="Town C.D."/>
            <person name="Hilson P."/>
        </authorList>
    </citation>
    <scope>NUCLEOTIDE SEQUENCE [LARGE SCALE MRNA] (ISOFORM 1)</scope>
    <source>
        <strain>cv. Columbia</strain>
    </source>
</reference>
<reference key="5">
    <citation type="journal article" date="2003" name="Plant Cell">
        <title>The Arabidopsis basic/helix-loop-helix transcription factor family.</title>
        <authorList>
            <person name="Toledo-Ortiz G."/>
            <person name="Huq E."/>
            <person name="Quail P.H."/>
        </authorList>
    </citation>
    <scope>GENE FAMILY</scope>
</reference>
<reference key="6">
    <citation type="journal article" date="2003" name="Plant Cell">
        <title>Update on the basic helix-loop-helix transcription factor gene family in Arabidopsis thaliana.</title>
        <authorList>
            <person name="Bailey P.C."/>
            <person name="Martin C."/>
            <person name="Toledo-Ortiz G."/>
            <person name="Quail P.H."/>
            <person name="Huq E."/>
            <person name="Heim M.A."/>
            <person name="Jakoby M."/>
            <person name="Werber M."/>
            <person name="Weisshaar B."/>
        </authorList>
    </citation>
    <scope>GENE FAMILY</scope>
    <scope>NOMENCLATURE</scope>
</reference>
<evidence type="ECO:0000255" key="1">
    <source>
        <dbReference type="PROSITE-ProRule" id="PRU00981"/>
    </source>
</evidence>
<evidence type="ECO:0000256" key="2">
    <source>
        <dbReference type="SAM" id="MobiDB-lite"/>
    </source>
</evidence>
<evidence type="ECO:0000269" key="3">
    <source>
    </source>
</evidence>
<evidence type="ECO:0000303" key="4">
    <source>
    </source>
</evidence>
<evidence type="ECO:0000305" key="5"/>
<sequence>MNSLVGDVPQSLSSLDDTTTCYNLDASCNKSLVEERPSKILKTTHISPNLHPFSSSNPPPPKHQPSSRILSFEKTGLHVMNHNSPNLIFSPKDEEIGLPEHKKAELIIRGTKRAQSLTRSQSNAQDHILAERKRREKLTQRFVALSALIPGLKKMDKASVLGDAIKHIKYLQESVKEYEEQKKEKTMESVVLVKKSSLVLDENHQPSSSSSSDGNRNSSSSNLPEIEVRVSGKDVLIKILCEKQKGNVIKIMGEIEKLGLSITNSNVLPFGPTFDISIIAQKNNNFDMKIEDVVKNLSFGLSKLT</sequence>
<keyword id="KW-0025">Alternative splicing</keyword>
<keyword id="KW-0238">DNA-binding</keyword>
<keyword id="KW-0539">Nucleus</keyword>
<keyword id="KW-1185">Reference proteome</keyword>
<keyword id="KW-0804">Transcription</keyword>
<keyword id="KW-0805">Transcription regulation</keyword>
<organism>
    <name type="scientific">Arabidopsis thaliana</name>
    <name type="common">Mouse-ear cress</name>
    <dbReference type="NCBI Taxonomy" id="3702"/>
    <lineage>
        <taxon>Eukaryota</taxon>
        <taxon>Viridiplantae</taxon>
        <taxon>Streptophyta</taxon>
        <taxon>Embryophyta</taxon>
        <taxon>Tracheophyta</taxon>
        <taxon>Spermatophyta</taxon>
        <taxon>Magnoliopsida</taxon>
        <taxon>eudicotyledons</taxon>
        <taxon>Gunneridae</taxon>
        <taxon>Pentapetalae</taxon>
        <taxon>rosids</taxon>
        <taxon>malvids</taxon>
        <taxon>Brassicales</taxon>
        <taxon>Brassicaceae</taxon>
        <taxon>Camelineae</taxon>
        <taxon>Arabidopsis</taxon>
    </lineage>
</organism>
<protein>
    <recommendedName>
        <fullName>Transcription factor bHLH18</fullName>
    </recommendedName>
    <alternativeName>
        <fullName>Basic helix-loop-helix protein 18</fullName>
        <shortName>AtbHLH18</shortName>
        <shortName>bHLH 18</shortName>
    </alternativeName>
    <alternativeName>
        <fullName>Transcription factor EN 28</fullName>
    </alternativeName>
    <alternativeName>
        <fullName>bHLH transcription factor bHLH018</fullName>
    </alternativeName>
</protein>
<proteinExistence type="evidence at protein level"/>
<accession>Q1PF17</accession>
<accession>A0MEP3</accession>
<accession>O82396</accession>
<accession>Q8S3F3</accession>
<feature type="chain" id="PRO_0000358732" description="Transcription factor bHLH18">
    <location>
        <begin position="1"/>
        <end position="305"/>
    </location>
</feature>
<feature type="domain" description="bHLH" evidence="1">
    <location>
        <begin position="122"/>
        <end position="171"/>
    </location>
</feature>
<feature type="region of interest" description="Disordered" evidence="2">
    <location>
        <begin position="41"/>
        <end position="67"/>
    </location>
</feature>
<feature type="region of interest" description="Disordered" evidence="2">
    <location>
        <begin position="201"/>
        <end position="224"/>
    </location>
</feature>
<feature type="compositionally biased region" description="Polar residues" evidence="2">
    <location>
        <begin position="44"/>
        <end position="56"/>
    </location>
</feature>
<feature type="compositionally biased region" description="Low complexity" evidence="2">
    <location>
        <begin position="207"/>
        <end position="222"/>
    </location>
</feature>
<feature type="splice variant" id="VSP_036076" description="In isoform 2." evidence="4">
    <location>
        <position position="282"/>
    </location>
</feature>
<comment type="subunit">
    <text evidence="5">Homodimer.</text>
</comment>
<comment type="interaction">
    <interactant intactId="EBI-15195549">
        <id>Q1PF17</id>
    </interactant>
    <interactant intactId="EBI-1640543">
        <id>Q0V7X4</id>
        <label>FIT</label>
    </interactant>
    <organismsDiffer>false</organismsDiffer>
    <experiments>3</experiments>
</comment>
<comment type="subcellular location">
    <subcellularLocation>
        <location evidence="1">Nucleus</location>
    </subcellularLocation>
</comment>
<comment type="alternative products">
    <event type="alternative splicing"/>
    <isoform>
        <id>Q1PF17-1</id>
        <name>1</name>
        <sequence type="displayed"/>
    </isoform>
    <isoform>
        <id>Q1PF17-2</id>
        <name>2</name>
        <sequence type="described" ref="VSP_036076"/>
    </isoform>
</comment>
<comment type="tissue specificity">
    <text evidence="3">Expressed in roots.</text>
</comment>
<comment type="induction">
    <text evidence="3">By cold treatment.</text>
</comment>
<comment type="sequence caution" evidence="5">
    <conflict type="erroneous gene model prediction">
        <sequence resource="EMBL-CDS" id="AAC63586"/>
    </conflict>
</comment>
<comment type="sequence caution" evidence="5">
    <conflict type="erroneous gene model prediction">
        <sequence resource="EMBL-CDS" id="AAM15234"/>
    </conflict>
</comment>
<comment type="sequence caution" evidence="5">
    <conflict type="erroneous termination">
        <sequence resource="EMBL-CDS" id="ABK28507"/>
    </conflict>
    <text>Extended C-terminus.</text>
</comment>